<sequence length="543" mass="57065">MAKDIKFSADARAAMVRGVDMLADTVKVTLGPKGRNVVLEKAFGSPLITNDGVTIAKEIELEDHFENMGAKLVSEVASKTNDIAGDGTTTATVLTQAIVHEGLKNVTAGANPIGIRRGIETATATAVEALKAIAQPVSGKEAIAQVAAVSSRSEKVGEYISEAMERVGNDGVITIEESRGMETELEVVEGMQFDRGYLSQYMVTDNEKMVADLENPFILITDKKVSNIQDILPLLEEVLKTNRPLLIIADDVDGEALPTLVLNKIRGTFNVVAVKAPGFGDRRKAMLEDIAILTGGTVITEDLGLELKDATMTALGQAAKITVDKDSTVIVEGSGSSEAIANRIALIKSQLETTTSDFDREKLQERLAKLAGGVAVIKVGAPTETALKEMKLRIEDALNATRAAVEEGIVAGGGTALITVIEKVAALELEGDDATGRNIVLRALEEPVRQIALNAGYEGSVVIDKLKNSPAGTGFNAATGEWVDMIKTGIIDPVKVTRSALQNAASVASLILTTEAVVANKPEPAAPAPAMPAGMDPGMMGGF</sequence>
<organism>
    <name type="scientific">Streptococcus pyogenes serotype M6 (strain ATCC BAA-946 / MGAS10394)</name>
    <dbReference type="NCBI Taxonomy" id="286636"/>
    <lineage>
        <taxon>Bacteria</taxon>
        <taxon>Bacillati</taxon>
        <taxon>Bacillota</taxon>
        <taxon>Bacilli</taxon>
        <taxon>Lactobacillales</taxon>
        <taxon>Streptococcaceae</taxon>
        <taxon>Streptococcus</taxon>
    </lineage>
</organism>
<comment type="function">
    <text evidence="1">Together with its co-chaperonin GroES, plays an essential role in assisting protein folding. The GroEL-GroES system forms a nano-cage that allows encapsulation of the non-native substrate proteins and provides a physical environment optimized to promote and accelerate protein folding.</text>
</comment>
<comment type="catalytic activity">
    <reaction evidence="1">
        <text>ATP + H2O + a folded polypeptide = ADP + phosphate + an unfolded polypeptide.</text>
        <dbReference type="EC" id="5.6.1.7"/>
    </reaction>
</comment>
<comment type="subunit">
    <text evidence="1">Forms a cylinder of 14 subunits composed of two heptameric rings stacked back-to-back. Interacts with the co-chaperonin GroES.</text>
</comment>
<comment type="subcellular location">
    <subcellularLocation>
        <location evidence="1">Cytoplasm</location>
    </subcellularLocation>
</comment>
<comment type="similarity">
    <text evidence="1">Belongs to the chaperonin (HSP60) family.</text>
</comment>
<comment type="sequence caution" evidence="3">
    <conflict type="erroneous initiation">
        <sequence resource="EMBL-CDS" id="AAT87895"/>
    </conflict>
</comment>
<accession>Q5X9L8</accession>
<accession>P82485</accession>
<evidence type="ECO:0000255" key="1">
    <source>
        <dbReference type="HAMAP-Rule" id="MF_00600"/>
    </source>
</evidence>
<evidence type="ECO:0000269" key="2">
    <source ref="2"/>
</evidence>
<evidence type="ECO:0000305" key="3"/>
<feature type="initiator methionine" description="Removed" evidence="2">
    <location>
        <position position="1"/>
    </location>
</feature>
<feature type="chain" id="PRO_0000063560" description="Chaperonin GroEL">
    <location>
        <begin position="2"/>
        <end position="543"/>
    </location>
</feature>
<feature type="binding site" evidence="1">
    <location>
        <begin position="29"/>
        <end position="32"/>
    </location>
    <ligand>
        <name>ATP</name>
        <dbReference type="ChEBI" id="CHEBI:30616"/>
    </ligand>
</feature>
<feature type="binding site" evidence="1">
    <location>
        <begin position="86"/>
        <end position="90"/>
    </location>
    <ligand>
        <name>ATP</name>
        <dbReference type="ChEBI" id="CHEBI:30616"/>
    </ligand>
</feature>
<feature type="binding site" evidence="1">
    <location>
        <position position="413"/>
    </location>
    <ligand>
        <name>ATP</name>
        <dbReference type="ChEBI" id="CHEBI:30616"/>
    </ligand>
</feature>
<feature type="binding site" evidence="1">
    <location>
        <begin position="476"/>
        <end position="478"/>
    </location>
    <ligand>
        <name>ATP</name>
        <dbReference type="ChEBI" id="CHEBI:30616"/>
    </ligand>
</feature>
<feature type="binding site" evidence="1">
    <location>
        <position position="492"/>
    </location>
    <ligand>
        <name>ATP</name>
        <dbReference type="ChEBI" id="CHEBI:30616"/>
    </ligand>
</feature>
<protein>
    <recommendedName>
        <fullName evidence="1">Chaperonin GroEL</fullName>
        <ecNumber evidence="1">5.6.1.7</ecNumber>
    </recommendedName>
    <alternativeName>
        <fullName evidence="1">60 kDa chaperonin</fullName>
    </alternativeName>
    <alternativeName>
        <fullName evidence="1">Chaperonin-60</fullName>
        <shortName evidence="1">Cpn60</shortName>
    </alternativeName>
</protein>
<gene>
    <name evidence="1" type="primary">groEL</name>
    <name evidence="1" type="synonym">groL</name>
    <name type="ordered locus">M6_Spy1760</name>
</gene>
<reference key="1">
    <citation type="journal article" date="2004" name="J. Infect. Dis.">
        <title>Progress toward characterization of the group A Streptococcus metagenome: complete genome sequence of a macrolide-resistant serotype M6 strain.</title>
        <authorList>
            <person name="Banks D.J."/>
            <person name="Porcella S.F."/>
            <person name="Barbian K.D."/>
            <person name="Beres S.B."/>
            <person name="Philips L.E."/>
            <person name="Voyich J.M."/>
            <person name="DeLeo F.R."/>
            <person name="Martin J.M."/>
            <person name="Somerville G.A."/>
            <person name="Musser J.M."/>
        </authorList>
    </citation>
    <scope>NUCLEOTIDE SEQUENCE [LARGE SCALE GENOMIC DNA]</scope>
    <source>
        <strain>ATCC BAA-946 / MGAS10394</strain>
    </source>
</reference>
<reference key="2">
    <citation type="submission" date="2000-05" db="UniProtKB">
        <title>Two-dimensional gel electrophoresis map of Streptococcus pyogenes proteins.</title>
        <authorList>
            <person name="Hogan D.A."/>
            <person name="Du P."/>
            <person name="Stevenson T.I."/>
            <person name="Whitton M."/>
            <person name="Kilby G.W."/>
            <person name="Rogers J."/>
            <person name="VanBogelen R.A."/>
        </authorList>
    </citation>
    <scope>PROTEIN SEQUENCE OF 2-12; 72-79; 105-131; 141-152; 167-195; 225-264; 276-284; 321-343; 392-402; 424-442 AND 488-498</scope>
    <scope>IDENTIFICATION BY MASS SPECTROMETRY</scope>
    <source>
        <strain>JRS4 / Serotype M6</strain>
    </source>
</reference>
<keyword id="KW-0067">ATP-binding</keyword>
<keyword id="KW-0143">Chaperone</keyword>
<keyword id="KW-0963">Cytoplasm</keyword>
<keyword id="KW-0903">Direct protein sequencing</keyword>
<keyword id="KW-0413">Isomerase</keyword>
<keyword id="KW-0547">Nucleotide-binding</keyword>
<keyword id="KW-0346">Stress response</keyword>
<dbReference type="EC" id="5.6.1.7" evidence="1"/>
<dbReference type="EMBL" id="CP000003">
    <property type="protein sequence ID" value="AAT87895.1"/>
    <property type="status" value="ALT_INIT"/>
    <property type="molecule type" value="Genomic_DNA"/>
</dbReference>
<dbReference type="RefSeq" id="WP_002982320.1">
    <property type="nucleotide sequence ID" value="NC_006086.1"/>
</dbReference>
<dbReference type="SMR" id="Q5X9L8"/>
<dbReference type="GeneID" id="69901534"/>
<dbReference type="KEGG" id="spa:M6_Spy1760"/>
<dbReference type="HOGENOM" id="CLU_016503_3_0_9"/>
<dbReference type="Proteomes" id="UP000001167">
    <property type="component" value="Chromosome"/>
</dbReference>
<dbReference type="GO" id="GO:0005737">
    <property type="term" value="C:cytoplasm"/>
    <property type="evidence" value="ECO:0007669"/>
    <property type="project" value="UniProtKB-SubCell"/>
</dbReference>
<dbReference type="GO" id="GO:0005524">
    <property type="term" value="F:ATP binding"/>
    <property type="evidence" value="ECO:0007669"/>
    <property type="project" value="UniProtKB-UniRule"/>
</dbReference>
<dbReference type="GO" id="GO:0140662">
    <property type="term" value="F:ATP-dependent protein folding chaperone"/>
    <property type="evidence" value="ECO:0007669"/>
    <property type="project" value="InterPro"/>
</dbReference>
<dbReference type="GO" id="GO:0016853">
    <property type="term" value="F:isomerase activity"/>
    <property type="evidence" value="ECO:0007669"/>
    <property type="project" value="UniProtKB-KW"/>
</dbReference>
<dbReference type="GO" id="GO:0051082">
    <property type="term" value="F:unfolded protein binding"/>
    <property type="evidence" value="ECO:0007669"/>
    <property type="project" value="UniProtKB-UniRule"/>
</dbReference>
<dbReference type="GO" id="GO:0042026">
    <property type="term" value="P:protein refolding"/>
    <property type="evidence" value="ECO:0007669"/>
    <property type="project" value="UniProtKB-UniRule"/>
</dbReference>
<dbReference type="CDD" id="cd03344">
    <property type="entry name" value="GroEL"/>
    <property type="match status" value="1"/>
</dbReference>
<dbReference type="FunFam" id="1.10.560.10:FF:000001">
    <property type="entry name" value="60 kDa chaperonin"/>
    <property type="match status" value="1"/>
</dbReference>
<dbReference type="FunFam" id="3.50.7.10:FF:000001">
    <property type="entry name" value="60 kDa chaperonin"/>
    <property type="match status" value="1"/>
</dbReference>
<dbReference type="Gene3D" id="3.50.7.10">
    <property type="entry name" value="GroEL"/>
    <property type="match status" value="1"/>
</dbReference>
<dbReference type="Gene3D" id="1.10.560.10">
    <property type="entry name" value="GroEL-like equatorial domain"/>
    <property type="match status" value="1"/>
</dbReference>
<dbReference type="Gene3D" id="3.30.260.10">
    <property type="entry name" value="TCP-1-like chaperonin intermediate domain"/>
    <property type="match status" value="1"/>
</dbReference>
<dbReference type="HAMAP" id="MF_00600">
    <property type="entry name" value="CH60"/>
    <property type="match status" value="1"/>
</dbReference>
<dbReference type="InterPro" id="IPR018370">
    <property type="entry name" value="Chaperonin_Cpn60_CS"/>
</dbReference>
<dbReference type="InterPro" id="IPR001844">
    <property type="entry name" value="Cpn60/GroEL"/>
</dbReference>
<dbReference type="InterPro" id="IPR002423">
    <property type="entry name" value="Cpn60/GroEL/TCP-1"/>
</dbReference>
<dbReference type="InterPro" id="IPR027409">
    <property type="entry name" value="GroEL-like_apical_dom_sf"/>
</dbReference>
<dbReference type="InterPro" id="IPR027413">
    <property type="entry name" value="GROEL-like_equatorial_sf"/>
</dbReference>
<dbReference type="InterPro" id="IPR027410">
    <property type="entry name" value="TCP-1-like_intermed_sf"/>
</dbReference>
<dbReference type="NCBIfam" id="TIGR02348">
    <property type="entry name" value="GroEL"/>
    <property type="match status" value="1"/>
</dbReference>
<dbReference type="NCBIfam" id="NF000592">
    <property type="entry name" value="PRK00013.1"/>
    <property type="match status" value="1"/>
</dbReference>
<dbReference type="NCBIfam" id="NF009487">
    <property type="entry name" value="PRK12849.1"/>
    <property type="match status" value="1"/>
</dbReference>
<dbReference type="NCBIfam" id="NF009488">
    <property type="entry name" value="PRK12850.1"/>
    <property type="match status" value="1"/>
</dbReference>
<dbReference type="NCBIfam" id="NF009489">
    <property type="entry name" value="PRK12851.1"/>
    <property type="match status" value="1"/>
</dbReference>
<dbReference type="PANTHER" id="PTHR45633">
    <property type="entry name" value="60 KDA HEAT SHOCK PROTEIN, MITOCHONDRIAL"/>
    <property type="match status" value="1"/>
</dbReference>
<dbReference type="Pfam" id="PF00118">
    <property type="entry name" value="Cpn60_TCP1"/>
    <property type="match status" value="1"/>
</dbReference>
<dbReference type="PRINTS" id="PR00298">
    <property type="entry name" value="CHAPERONIN60"/>
</dbReference>
<dbReference type="SUPFAM" id="SSF52029">
    <property type="entry name" value="GroEL apical domain-like"/>
    <property type="match status" value="1"/>
</dbReference>
<dbReference type="SUPFAM" id="SSF48592">
    <property type="entry name" value="GroEL equatorial domain-like"/>
    <property type="match status" value="1"/>
</dbReference>
<dbReference type="SUPFAM" id="SSF54849">
    <property type="entry name" value="GroEL-intermediate domain like"/>
    <property type="match status" value="1"/>
</dbReference>
<dbReference type="PROSITE" id="PS00296">
    <property type="entry name" value="CHAPERONINS_CPN60"/>
    <property type="match status" value="1"/>
</dbReference>
<name>CH60_STRP6</name>
<proteinExistence type="evidence at protein level"/>